<comment type="function">
    <text evidence="2 3">Calmodulin mediates the control of a large number of enzymes, ion channels and other proteins by Ca(2+) (PubMed:21419340). Among the enzymes to be stimulated by the calmodulin-Ca(2+) complex are a number of protein kinases and phosphatases (PubMed:21419340). Activates MPK8 in vitro (PubMed:21419340). Required during nonhost resistance (NHR) to the nonadapted fungal pathogens Phakopsora pachyrhizi and Blumeria graminis f.sp. hordei, probably via its Ca(2+)-dependent interaction with ABCG36 (PubMed:26315018).</text>
</comment>
<comment type="subunit">
    <text evidence="2 3">Interacts with MPK8 (PubMed:21419340). Binds to ABCG36 in a Ca(2+)-dependent manner (PubMed:26315018).</text>
</comment>
<comment type="interaction">
    <interactant intactId="EBI-1236031">
        <id>P59220</id>
    </interactant>
    <interactant intactId="EBI-1235713">
        <id>Q9ZVM9</id>
        <label>At1g54610</label>
    </interactant>
    <organismsDiffer>false</organismsDiffer>
    <experiments>2</experiments>
</comment>
<comment type="interaction">
    <interactant intactId="EBI-1236031">
        <id>P59220</id>
    </interactant>
    <interactant intactId="EBI-1239029">
        <id>O48788</id>
        <label>At2g26730</label>
    </interactant>
    <organismsDiffer>false</organismsDiffer>
    <experiments>2</experiments>
</comment>
<comment type="interaction">
    <interactant intactId="EBI-1236031">
        <id>P59220</id>
    </interactant>
    <interactant intactId="EBI-1238677">
        <id>Q9M8T0</id>
        <label>At3g02880</label>
    </interactant>
    <organismsDiffer>false</organismsDiffer>
    <experiments>2</experiments>
</comment>
<comment type="interaction">
    <interactant intactId="EBI-1236031">
        <id>P59220</id>
    </interactant>
    <interactant intactId="EBI-1644586">
        <id>Q9LD45</id>
        <label>BI-1</label>
    </interactant>
    <organismsDiffer>false</organismsDiffer>
    <experiments>2</experiments>
</comment>
<comment type="interaction">
    <interactant intactId="EBI-1236031">
        <id>P59220</id>
    </interactant>
    <interactant intactId="EBI-537551">
        <id>Q9LDI3</id>
        <label>CIPK24</label>
    </interactant>
    <organismsDiffer>false</organismsDiffer>
    <experiments>2</experiments>
</comment>
<comment type="interaction">
    <interactant intactId="EBI-1236031">
        <id>P59220</id>
    </interactant>
    <interactant intactId="EBI-1235782">
        <id>Q42479</id>
        <label>CPK3</label>
    </interactant>
    <organismsDiffer>false</organismsDiffer>
    <experiments>2</experiments>
</comment>
<comment type="interaction">
    <interactant intactId="EBI-1236031">
        <id>P59220</id>
    </interactant>
    <interactant intactId="EBI-1235738">
        <id>Q9SSF8</id>
        <label>CPK30</label>
    </interactant>
    <organismsDiffer>false</organismsDiffer>
    <experiments>2</experiments>
</comment>
<comment type="interaction">
    <interactant intactId="EBI-1236031">
        <id>P59220</id>
    </interactant>
    <interactant intactId="EBI-1239070">
        <id>Q9LTM4</id>
        <label>CYP71B19</label>
    </interactant>
    <organismsDiffer>false</organismsDiffer>
    <experiments>2</experiments>
</comment>
<comment type="interaction">
    <interactant intactId="EBI-1236031">
        <id>P59220</id>
    </interactant>
    <interactant intactId="EBI-1238437">
        <id>Q9SLP1</id>
        <label>CYP78A9</label>
    </interactant>
    <organismsDiffer>false</organismsDiffer>
    <experiments>2</experiments>
</comment>
<comment type="interaction">
    <interactant intactId="EBI-1236031">
        <id>P59220</id>
    </interactant>
    <interactant intactId="EBI-1235834">
        <id>P55737</id>
        <label>HSP90-2</label>
    </interactant>
    <organismsDiffer>false</organismsDiffer>
    <experiments>2</experiments>
</comment>
<comment type="interaction">
    <interactant intactId="EBI-1236031">
        <id>P59220</id>
    </interactant>
    <interactant intactId="EBI-1236013">
        <id>P83755</id>
        <label>psbA</label>
    </interactant>
    <organismsDiffer>false</organismsDiffer>
    <experiments>2</experiments>
</comment>
<comment type="interaction">
    <interactant intactId="EBI-1236031">
        <id>P59220</id>
    </interactant>
    <interactant intactId="EBI-1235819">
        <id>Q2V359</id>
        <label>SAUR70</label>
    </interactant>
    <organismsDiffer>false</organismsDiffer>
    <experiments>2</experiments>
</comment>
<comment type="subcellular location">
    <subcellularLocation>
        <location evidence="3">Cell membrane</location>
        <topology evidence="5">Peripheral membrane protein</topology>
        <orientation evidence="5">Cytoplasmic side</orientation>
    </subcellularLocation>
    <subcellularLocation>
        <location evidence="3">Nucleus</location>
    </subcellularLocation>
    <text evidence="3">Co-localizes with ABCG36 at the cytoplasm/plasma membrane interface.</text>
</comment>
<comment type="disruption phenotype">
    <text evidence="3">Compromised nonhost resistance (NHR) to the nonadapted fungal pathogens Phakopsora pachyrhizi and Blumeria graminis f.sp. hordei.</text>
</comment>
<comment type="miscellaneous">
    <text>This protein has four functional calcium-binding sites.</text>
</comment>
<comment type="similarity">
    <text evidence="5">Belongs to the calmodulin family.</text>
</comment>
<name>CALM7_ARATH</name>
<protein>
    <recommendedName>
        <fullName evidence="4">Calmodulin-7</fullName>
        <shortName evidence="4">CaM-7</shortName>
    </recommendedName>
</protein>
<gene>
    <name evidence="4" type="primary">CAM7</name>
    <name evidence="6" type="ordered locus">At3g43810</name>
    <name evidence="7" type="ORF">T28A8.100</name>
</gene>
<feature type="chain" id="PRO_0000198283" description="Calmodulin-7">
    <location>
        <begin position="1"/>
        <end position="149"/>
    </location>
</feature>
<feature type="domain" description="EF-hand 1" evidence="1">
    <location>
        <begin position="8"/>
        <end position="43"/>
    </location>
</feature>
<feature type="domain" description="EF-hand 2" evidence="1">
    <location>
        <begin position="44"/>
        <end position="79"/>
    </location>
</feature>
<feature type="domain" description="EF-hand 3" evidence="1">
    <location>
        <begin position="81"/>
        <end position="116"/>
    </location>
</feature>
<feature type="domain" description="EF-hand 4" evidence="1">
    <location>
        <begin position="117"/>
        <end position="149"/>
    </location>
</feature>
<feature type="binding site" evidence="1">
    <location>
        <position position="21"/>
    </location>
    <ligand>
        <name>Ca(2+)</name>
        <dbReference type="ChEBI" id="CHEBI:29108"/>
        <label>1</label>
    </ligand>
</feature>
<feature type="binding site" evidence="1">
    <location>
        <position position="23"/>
    </location>
    <ligand>
        <name>Ca(2+)</name>
        <dbReference type="ChEBI" id="CHEBI:29108"/>
        <label>1</label>
    </ligand>
</feature>
<feature type="binding site" evidence="1">
    <location>
        <position position="25"/>
    </location>
    <ligand>
        <name>Ca(2+)</name>
        <dbReference type="ChEBI" id="CHEBI:29108"/>
        <label>1</label>
    </ligand>
</feature>
<feature type="binding site" evidence="1">
    <location>
        <position position="27"/>
    </location>
    <ligand>
        <name>Ca(2+)</name>
        <dbReference type="ChEBI" id="CHEBI:29108"/>
        <label>1</label>
    </ligand>
</feature>
<feature type="binding site" evidence="1">
    <location>
        <position position="32"/>
    </location>
    <ligand>
        <name>Ca(2+)</name>
        <dbReference type="ChEBI" id="CHEBI:29108"/>
        <label>1</label>
    </ligand>
</feature>
<feature type="binding site" evidence="1">
    <location>
        <position position="57"/>
    </location>
    <ligand>
        <name>Ca(2+)</name>
        <dbReference type="ChEBI" id="CHEBI:29108"/>
        <label>2</label>
    </ligand>
</feature>
<feature type="binding site" evidence="1">
    <location>
        <position position="59"/>
    </location>
    <ligand>
        <name>Ca(2+)</name>
        <dbReference type="ChEBI" id="CHEBI:29108"/>
        <label>2</label>
    </ligand>
</feature>
<feature type="binding site" evidence="1">
    <location>
        <position position="61"/>
    </location>
    <ligand>
        <name>Ca(2+)</name>
        <dbReference type="ChEBI" id="CHEBI:29108"/>
        <label>2</label>
    </ligand>
</feature>
<feature type="binding site" evidence="1">
    <location>
        <position position="63"/>
    </location>
    <ligand>
        <name>Ca(2+)</name>
        <dbReference type="ChEBI" id="CHEBI:29108"/>
        <label>2</label>
    </ligand>
</feature>
<feature type="binding site" evidence="1">
    <location>
        <position position="68"/>
    </location>
    <ligand>
        <name>Ca(2+)</name>
        <dbReference type="ChEBI" id="CHEBI:29108"/>
        <label>2</label>
    </ligand>
</feature>
<feature type="binding site" evidence="1">
    <location>
        <position position="94"/>
    </location>
    <ligand>
        <name>Ca(2+)</name>
        <dbReference type="ChEBI" id="CHEBI:29108"/>
        <label>3</label>
    </ligand>
</feature>
<feature type="binding site" evidence="1">
    <location>
        <position position="96"/>
    </location>
    <ligand>
        <name>Ca(2+)</name>
        <dbReference type="ChEBI" id="CHEBI:29108"/>
        <label>3</label>
    </ligand>
</feature>
<feature type="binding site" evidence="1">
    <location>
        <position position="98"/>
    </location>
    <ligand>
        <name>Ca(2+)</name>
        <dbReference type="ChEBI" id="CHEBI:29108"/>
        <label>3</label>
    </ligand>
</feature>
<feature type="binding site" evidence="1">
    <location>
        <position position="105"/>
    </location>
    <ligand>
        <name>Ca(2+)</name>
        <dbReference type="ChEBI" id="CHEBI:29108"/>
        <label>3</label>
    </ligand>
</feature>
<feature type="binding site" evidence="1">
    <location>
        <position position="130"/>
    </location>
    <ligand>
        <name>Ca(2+)</name>
        <dbReference type="ChEBI" id="CHEBI:29108"/>
        <label>4</label>
    </ligand>
</feature>
<feature type="binding site" evidence="1">
    <location>
        <position position="132"/>
    </location>
    <ligand>
        <name>Ca(2+)</name>
        <dbReference type="ChEBI" id="CHEBI:29108"/>
        <label>4</label>
    </ligand>
</feature>
<feature type="binding site" evidence="1">
    <location>
        <position position="134"/>
    </location>
    <ligand>
        <name>Ca(2+)</name>
        <dbReference type="ChEBI" id="CHEBI:29108"/>
        <label>4</label>
    </ligand>
</feature>
<feature type="binding site" evidence="1">
    <location>
        <position position="136"/>
    </location>
    <ligand>
        <name>Ca(2+)</name>
        <dbReference type="ChEBI" id="CHEBI:29108"/>
        <label>4</label>
    </ligand>
</feature>
<feature type="binding site" evidence="1">
    <location>
        <position position="141"/>
    </location>
    <ligand>
        <name>Ca(2+)</name>
        <dbReference type="ChEBI" id="CHEBI:29108"/>
        <label>4</label>
    </ligand>
</feature>
<feature type="helix" evidence="8">
    <location>
        <begin position="7"/>
        <end position="20"/>
    </location>
</feature>
<feature type="strand" evidence="9">
    <location>
        <begin position="25"/>
        <end position="28"/>
    </location>
</feature>
<feature type="helix" evidence="8">
    <location>
        <begin position="30"/>
        <end position="39"/>
    </location>
</feature>
<feature type="helix" evidence="8">
    <location>
        <begin position="46"/>
        <end position="56"/>
    </location>
</feature>
<feature type="strand" evidence="8">
    <location>
        <begin position="61"/>
        <end position="64"/>
    </location>
</feature>
<feature type="helix" evidence="8">
    <location>
        <begin position="66"/>
        <end position="74"/>
    </location>
</feature>
<feature type="helix" evidence="8">
    <location>
        <begin position="82"/>
        <end position="93"/>
    </location>
</feature>
<feature type="helix" evidence="8">
    <location>
        <begin position="103"/>
        <end position="112"/>
    </location>
</feature>
<feature type="helix" evidence="8">
    <location>
        <begin position="119"/>
        <end position="129"/>
    </location>
</feature>
<feature type="strand" evidence="8">
    <location>
        <begin position="131"/>
        <end position="137"/>
    </location>
</feature>
<feature type="helix" evidence="8">
    <location>
        <begin position="139"/>
        <end position="146"/>
    </location>
</feature>
<keyword id="KW-0002">3D-structure</keyword>
<keyword id="KW-0106">Calcium</keyword>
<keyword id="KW-1003">Cell membrane</keyword>
<keyword id="KW-0472">Membrane</keyword>
<keyword id="KW-0479">Metal-binding</keyword>
<keyword id="KW-0539">Nucleus</keyword>
<keyword id="KW-1185">Reference proteome</keyword>
<keyword id="KW-0677">Repeat</keyword>
<reference key="1">
    <citation type="journal article" date="2002" name="Planta">
        <title>Characterization of three new members of the Arabidopsis thaliana calmodulin gene family: conserved and highly diverged members of the gene family functionally complement a yeast calmodulin null.</title>
        <authorList>
            <person name="Zielinski R.E."/>
        </authorList>
    </citation>
    <scope>NUCLEOTIDE SEQUENCE [MRNA]</scope>
    <scope>CHARACTERIZATION</scope>
    <source>
        <strain>cv. Columbia</strain>
    </source>
</reference>
<reference key="2">
    <citation type="journal article" date="2000" name="Nature">
        <title>Sequence and analysis of chromosome 3 of the plant Arabidopsis thaliana.</title>
        <authorList>
            <person name="Salanoubat M."/>
            <person name="Lemcke K."/>
            <person name="Rieger M."/>
            <person name="Ansorge W."/>
            <person name="Unseld M."/>
            <person name="Fartmann B."/>
            <person name="Valle G."/>
            <person name="Bloecker H."/>
            <person name="Perez-Alonso M."/>
            <person name="Obermaier B."/>
            <person name="Delseny M."/>
            <person name="Boutry M."/>
            <person name="Grivell L.A."/>
            <person name="Mache R."/>
            <person name="Puigdomenech P."/>
            <person name="De Simone V."/>
            <person name="Choisne N."/>
            <person name="Artiguenave F."/>
            <person name="Robert C."/>
            <person name="Brottier P."/>
            <person name="Wincker P."/>
            <person name="Cattolico L."/>
            <person name="Weissenbach J."/>
            <person name="Saurin W."/>
            <person name="Quetier F."/>
            <person name="Schaefer M."/>
            <person name="Mueller-Auer S."/>
            <person name="Gabel C."/>
            <person name="Fuchs M."/>
            <person name="Benes V."/>
            <person name="Wurmbach E."/>
            <person name="Drzonek H."/>
            <person name="Erfle H."/>
            <person name="Jordan N."/>
            <person name="Bangert S."/>
            <person name="Wiedelmann R."/>
            <person name="Kranz H."/>
            <person name="Voss H."/>
            <person name="Holland R."/>
            <person name="Brandt P."/>
            <person name="Nyakatura G."/>
            <person name="Vezzi A."/>
            <person name="D'Angelo M."/>
            <person name="Pallavicini A."/>
            <person name="Toppo S."/>
            <person name="Simionati B."/>
            <person name="Conrad A."/>
            <person name="Hornischer K."/>
            <person name="Kauer G."/>
            <person name="Loehnert T.-H."/>
            <person name="Nordsiek G."/>
            <person name="Reichelt J."/>
            <person name="Scharfe M."/>
            <person name="Schoen O."/>
            <person name="Bargues M."/>
            <person name="Terol J."/>
            <person name="Climent J."/>
            <person name="Navarro P."/>
            <person name="Collado C."/>
            <person name="Perez-Perez A."/>
            <person name="Ottenwaelder B."/>
            <person name="Duchemin D."/>
            <person name="Cooke R."/>
            <person name="Laudie M."/>
            <person name="Berger-Llauro C."/>
            <person name="Purnelle B."/>
            <person name="Masuy D."/>
            <person name="de Haan M."/>
            <person name="Maarse A.C."/>
            <person name="Alcaraz J.-P."/>
            <person name="Cottet A."/>
            <person name="Casacuberta E."/>
            <person name="Monfort A."/>
            <person name="Argiriou A."/>
            <person name="Flores M."/>
            <person name="Liguori R."/>
            <person name="Vitale D."/>
            <person name="Mannhaupt G."/>
            <person name="Haase D."/>
            <person name="Schoof H."/>
            <person name="Rudd S."/>
            <person name="Zaccaria P."/>
            <person name="Mewes H.-W."/>
            <person name="Mayer K.F.X."/>
            <person name="Kaul S."/>
            <person name="Town C.D."/>
            <person name="Koo H.L."/>
            <person name="Tallon L.J."/>
            <person name="Jenkins J."/>
            <person name="Rooney T."/>
            <person name="Rizzo M."/>
            <person name="Walts A."/>
            <person name="Utterback T."/>
            <person name="Fujii C.Y."/>
            <person name="Shea T.P."/>
            <person name="Creasy T.H."/>
            <person name="Haas B."/>
            <person name="Maiti R."/>
            <person name="Wu D."/>
            <person name="Peterson J."/>
            <person name="Van Aken S."/>
            <person name="Pai G."/>
            <person name="Militscher J."/>
            <person name="Sellers P."/>
            <person name="Gill J.E."/>
            <person name="Feldblyum T.V."/>
            <person name="Preuss D."/>
            <person name="Lin X."/>
            <person name="Nierman W.C."/>
            <person name="Salzberg S.L."/>
            <person name="White O."/>
            <person name="Venter J.C."/>
            <person name="Fraser C.M."/>
            <person name="Kaneko T."/>
            <person name="Nakamura Y."/>
            <person name="Sato S."/>
            <person name="Kato T."/>
            <person name="Asamizu E."/>
            <person name="Sasamoto S."/>
            <person name="Kimura T."/>
            <person name="Idesawa K."/>
            <person name="Kawashima K."/>
            <person name="Kishida Y."/>
            <person name="Kiyokawa C."/>
            <person name="Kohara M."/>
            <person name="Matsumoto M."/>
            <person name="Matsuno A."/>
            <person name="Muraki A."/>
            <person name="Nakayama S."/>
            <person name="Nakazaki N."/>
            <person name="Shinpo S."/>
            <person name="Takeuchi C."/>
            <person name="Wada T."/>
            <person name="Watanabe A."/>
            <person name="Yamada M."/>
            <person name="Yasuda M."/>
            <person name="Tabata S."/>
        </authorList>
    </citation>
    <scope>NUCLEOTIDE SEQUENCE [LARGE SCALE GENOMIC DNA]</scope>
    <source>
        <strain>cv. Columbia</strain>
    </source>
</reference>
<reference key="3">
    <citation type="journal article" date="2017" name="Plant J.">
        <title>Araport11: a complete reannotation of the Arabidopsis thaliana reference genome.</title>
        <authorList>
            <person name="Cheng C.Y."/>
            <person name="Krishnakumar V."/>
            <person name="Chan A.P."/>
            <person name="Thibaud-Nissen F."/>
            <person name="Schobel S."/>
            <person name="Town C.D."/>
        </authorList>
    </citation>
    <scope>GENOME REANNOTATION</scope>
    <source>
        <strain>cv. Columbia</strain>
    </source>
</reference>
<reference key="4">
    <citation type="submission" date="2002-03" db="EMBL/GenBank/DDBJ databases">
        <title>Full-length cDNA from Arabidopsis thaliana.</title>
        <authorList>
            <person name="Brover V.V."/>
            <person name="Troukhan M.E."/>
            <person name="Alexandrov N.A."/>
            <person name="Lu Y.-P."/>
            <person name="Flavell R.B."/>
            <person name="Feldmann K.A."/>
        </authorList>
    </citation>
    <scope>NUCLEOTIDE SEQUENCE [LARGE SCALE MRNA]</scope>
</reference>
<reference key="5">
    <citation type="journal article" date="2003" name="New Phytol.">
        <title>Calmodulins and related potential calcium sensors of Arabidopsis.</title>
        <authorList>
            <person name="McCormack E."/>
            <person name="Braam J."/>
        </authorList>
    </citation>
    <scope>GENE FAMILY</scope>
    <scope>NOMENCLATURE</scope>
</reference>
<reference key="6">
    <citation type="journal article" date="2011" name="Mol. Cell">
        <title>Calmodulin-dependent activation of MAP kinase for ROS homeostasis in Arabidopsis.</title>
        <authorList>
            <person name="Takahashi F."/>
            <person name="Mizoguchi T."/>
            <person name="Yoshida R."/>
            <person name="Ichimura K."/>
            <person name="Shinozaki K."/>
        </authorList>
    </citation>
    <scope>INTERACTION WITH MPK8</scope>
    <scope>FUNCTION</scope>
</reference>
<reference key="7">
    <citation type="journal article" date="2016" name="New Phytol.">
        <title>ABC transporter PEN3/PDR8/ABCG36 interacts with calmodulin that, like PEN3, is required for Arabidopsis nonhost resistance.</title>
        <authorList>
            <person name="Campe R."/>
            <person name="Langenbach C."/>
            <person name="Leissing F."/>
            <person name="Popescu G.V."/>
            <person name="Popescu S.C."/>
            <person name="Goellner K."/>
            <person name="Beckers G.J."/>
            <person name="Conrath U."/>
        </authorList>
    </citation>
    <scope>FUNCTION</scope>
    <scope>DISRUPTION PHENOTYPE</scope>
    <scope>INTERACTION WITH ABCG36</scope>
    <scope>SUBCELLULAR LOCATION</scope>
    <source>
        <strain>cv. Columbia</strain>
    </source>
</reference>
<proteinExistence type="evidence at protein level"/>
<sequence length="149" mass="16848">MADQLTDDQISEFKEAFSLFDKDGDGCITTKELGTVMRSLGQNPTEAELQDMINEVDADGNGTIDFPEFLNLMARKMKDTDSEEELKEAFRVFDKDQNGFISAAELRHVMTNLGEKLTDEEVDEMIREADVDGDGQINYEEFVKVMMAK</sequence>
<evidence type="ECO:0000255" key="1">
    <source>
        <dbReference type="PROSITE-ProRule" id="PRU00448"/>
    </source>
</evidence>
<evidence type="ECO:0000269" key="2">
    <source>
    </source>
</evidence>
<evidence type="ECO:0000269" key="3">
    <source>
    </source>
</evidence>
<evidence type="ECO:0000303" key="4">
    <source>
    </source>
</evidence>
<evidence type="ECO:0000305" key="5"/>
<evidence type="ECO:0000312" key="6">
    <source>
        <dbReference type="Araport" id="AT3G43810"/>
    </source>
</evidence>
<evidence type="ECO:0000312" key="7">
    <source>
        <dbReference type="EMBL" id="CAB83153.1"/>
    </source>
</evidence>
<evidence type="ECO:0007829" key="8">
    <source>
        <dbReference type="PDB" id="4AQR"/>
    </source>
</evidence>
<evidence type="ECO:0007829" key="9">
    <source>
        <dbReference type="PDB" id="5A2H"/>
    </source>
</evidence>
<dbReference type="EMBL" id="AF178073">
    <property type="protein sequence ID" value="AAD53313.1"/>
    <property type="molecule type" value="mRNA"/>
</dbReference>
<dbReference type="EMBL" id="AL162691">
    <property type="protein sequence ID" value="CAB83153.1"/>
    <property type="molecule type" value="Genomic_DNA"/>
</dbReference>
<dbReference type="EMBL" id="CP002686">
    <property type="protein sequence ID" value="AEE77831.1"/>
    <property type="molecule type" value="Genomic_DNA"/>
</dbReference>
<dbReference type="EMBL" id="AY088477">
    <property type="protein sequence ID" value="AAM66013.1"/>
    <property type="molecule type" value="mRNA"/>
</dbReference>
<dbReference type="PIR" id="T47417">
    <property type="entry name" value="T47417"/>
</dbReference>
<dbReference type="RefSeq" id="NP_189967.1">
    <property type="nucleotide sequence ID" value="NM_114249.4"/>
</dbReference>
<dbReference type="PDB" id="4AQR">
    <property type="method" value="X-ray"/>
    <property type="resolution" value="1.95 A"/>
    <property type="chains" value="A/B=1-149"/>
</dbReference>
<dbReference type="PDB" id="5A2H">
    <property type="method" value="X-ray"/>
    <property type="resolution" value="2.27 A"/>
    <property type="chains" value="A=1-149"/>
</dbReference>
<dbReference type="PDBsum" id="4AQR"/>
<dbReference type="PDBsum" id="5A2H"/>
<dbReference type="SASBDB" id="P59220"/>
<dbReference type="SMR" id="P59220"/>
<dbReference type="BioGRID" id="8812">
    <property type="interactions" value="127"/>
</dbReference>
<dbReference type="FunCoup" id="P59220">
    <property type="interactions" value="3494"/>
</dbReference>
<dbReference type="IntAct" id="P59220">
    <property type="interactions" value="122"/>
</dbReference>
<dbReference type="STRING" id="3702.P59220"/>
<dbReference type="iPTMnet" id="P59220"/>
<dbReference type="PaxDb" id="3702-AT3G43810.1"/>
<dbReference type="ProteomicsDB" id="239187"/>
<dbReference type="EnsemblPlants" id="AT3G43810.1">
    <property type="protein sequence ID" value="AT3G43810.1"/>
    <property type="gene ID" value="AT3G43810"/>
</dbReference>
<dbReference type="GeneID" id="823492"/>
<dbReference type="Gramene" id="AT3G43810.1">
    <property type="protein sequence ID" value="AT3G43810.1"/>
    <property type="gene ID" value="AT3G43810"/>
</dbReference>
<dbReference type="KEGG" id="ath:AT3G43810"/>
<dbReference type="Araport" id="AT3G43810"/>
<dbReference type="TAIR" id="AT3G43810">
    <property type="gene designation" value="CAM7"/>
</dbReference>
<dbReference type="eggNOG" id="KOG0027">
    <property type="taxonomic scope" value="Eukaryota"/>
</dbReference>
<dbReference type="HOGENOM" id="CLU_061288_2_0_1"/>
<dbReference type="InParanoid" id="P59220"/>
<dbReference type="OMA" id="ARKMKEC"/>
<dbReference type="PhylomeDB" id="P59220"/>
<dbReference type="SABIO-RK" id="P59220"/>
<dbReference type="EvolutionaryTrace" id="P59220"/>
<dbReference type="PRO" id="PR:P59220"/>
<dbReference type="Proteomes" id="UP000006548">
    <property type="component" value="Chromosome 3"/>
</dbReference>
<dbReference type="ExpressionAtlas" id="P59220">
    <property type="expression patterns" value="baseline and differential"/>
</dbReference>
<dbReference type="GO" id="GO:0005829">
    <property type="term" value="C:cytosol"/>
    <property type="evidence" value="ECO:0007005"/>
    <property type="project" value="TAIR"/>
</dbReference>
<dbReference type="GO" id="GO:0005634">
    <property type="term" value="C:nucleus"/>
    <property type="evidence" value="ECO:0000314"/>
    <property type="project" value="UniProtKB"/>
</dbReference>
<dbReference type="GO" id="GO:0005886">
    <property type="term" value="C:plasma membrane"/>
    <property type="evidence" value="ECO:0000314"/>
    <property type="project" value="UniProtKB"/>
</dbReference>
<dbReference type="GO" id="GO:0005509">
    <property type="term" value="F:calcium ion binding"/>
    <property type="evidence" value="ECO:0007669"/>
    <property type="project" value="InterPro"/>
</dbReference>
<dbReference type="GO" id="GO:0050832">
    <property type="term" value="P:defense response to fungus"/>
    <property type="evidence" value="ECO:0000315"/>
    <property type="project" value="UniProtKB"/>
</dbReference>
<dbReference type="GO" id="GO:0005513">
    <property type="term" value="P:detection of calcium ion"/>
    <property type="evidence" value="ECO:0000250"/>
    <property type="project" value="TAIR"/>
</dbReference>
<dbReference type="GO" id="GO:0010099">
    <property type="term" value="P:regulation of photomorphogenesis"/>
    <property type="evidence" value="ECO:0000315"/>
    <property type="project" value="TAIR"/>
</dbReference>
<dbReference type="CDD" id="cd00051">
    <property type="entry name" value="EFh"/>
    <property type="match status" value="2"/>
</dbReference>
<dbReference type="FunFam" id="1.10.238.10:FF:000034">
    <property type="entry name" value="Calmodulin"/>
    <property type="match status" value="1"/>
</dbReference>
<dbReference type="FunFam" id="1.10.238.10:FF:000042">
    <property type="entry name" value="Calmodulin"/>
    <property type="match status" value="1"/>
</dbReference>
<dbReference type="Gene3D" id="1.10.238.10">
    <property type="entry name" value="EF-hand"/>
    <property type="match status" value="3"/>
</dbReference>
<dbReference type="InterPro" id="IPR050230">
    <property type="entry name" value="CALM/Myosin/TropC-like"/>
</dbReference>
<dbReference type="InterPro" id="IPR011992">
    <property type="entry name" value="EF-hand-dom_pair"/>
</dbReference>
<dbReference type="InterPro" id="IPR018247">
    <property type="entry name" value="EF_Hand_1_Ca_BS"/>
</dbReference>
<dbReference type="InterPro" id="IPR002048">
    <property type="entry name" value="EF_hand_dom"/>
</dbReference>
<dbReference type="PANTHER" id="PTHR23048:SF53">
    <property type="entry name" value="CALMODULIN"/>
    <property type="match status" value="1"/>
</dbReference>
<dbReference type="PANTHER" id="PTHR23048">
    <property type="entry name" value="MYOSIN LIGHT CHAIN 1, 3"/>
    <property type="match status" value="1"/>
</dbReference>
<dbReference type="Pfam" id="PF13499">
    <property type="entry name" value="EF-hand_7"/>
    <property type="match status" value="2"/>
</dbReference>
<dbReference type="SMART" id="SM00054">
    <property type="entry name" value="EFh"/>
    <property type="match status" value="4"/>
</dbReference>
<dbReference type="SUPFAM" id="SSF47473">
    <property type="entry name" value="EF-hand"/>
    <property type="match status" value="1"/>
</dbReference>
<dbReference type="PROSITE" id="PS00018">
    <property type="entry name" value="EF_HAND_1"/>
    <property type="match status" value="4"/>
</dbReference>
<dbReference type="PROSITE" id="PS50222">
    <property type="entry name" value="EF_HAND_2"/>
    <property type="match status" value="4"/>
</dbReference>
<accession>P59220</accession>
<organism>
    <name type="scientific">Arabidopsis thaliana</name>
    <name type="common">Mouse-ear cress</name>
    <dbReference type="NCBI Taxonomy" id="3702"/>
    <lineage>
        <taxon>Eukaryota</taxon>
        <taxon>Viridiplantae</taxon>
        <taxon>Streptophyta</taxon>
        <taxon>Embryophyta</taxon>
        <taxon>Tracheophyta</taxon>
        <taxon>Spermatophyta</taxon>
        <taxon>Magnoliopsida</taxon>
        <taxon>eudicotyledons</taxon>
        <taxon>Gunneridae</taxon>
        <taxon>Pentapetalae</taxon>
        <taxon>rosids</taxon>
        <taxon>malvids</taxon>
        <taxon>Brassicales</taxon>
        <taxon>Brassicaceae</taxon>
        <taxon>Camelineae</taxon>
        <taxon>Arabidopsis</taxon>
    </lineage>
</organism>